<dbReference type="EMBL" id="AACS02000005">
    <property type="protein sequence ID" value="EAU84428.2"/>
    <property type="molecule type" value="Genomic_DNA"/>
</dbReference>
<dbReference type="RefSeq" id="XP_001837512.2">
    <property type="nucleotide sequence ID" value="XM_001837460.2"/>
</dbReference>
<dbReference type="STRING" id="240176.A8NYS9"/>
<dbReference type="GeneID" id="6014069"/>
<dbReference type="KEGG" id="cci:CC1G_01424"/>
<dbReference type="VEuPathDB" id="FungiDB:CC1G_01424"/>
<dbReference type="eggNOG" id="ENOG502QT3W">
    <property type="taxonomic scope" value="Eukaryota"/>
</dbReference>
<dbReference type="HOGENOM" id="CLU_010017_0_0_1"/>
<dbReference type="InParanoid" id="A8NYS9"/>
<dbReference type="OMA" id="YRIPRMP"/>
<dbReference type="OrthoDB" id="17927at2759"/>
<dbReference type="Proteomes" id="UP000001861">
    <property type="component" value="Unassembled WGS sequence"/>
</dbReference>
<dbReference type="GO" id="GO:0032865">
    <property type="term" value="C:ERMES complex"/>
    <property type="evidence" value="ECO:0007669"/>
    <property type="project" value="InterPro"/>
</dbReference>
<dbReference type="GO" id="GO:0008289">
    <property type="term" value="F:lipid binding"/>
    <property type="evidence" value="ECO:0007669"/>
    <property type="project" value="UniProtKB-KW"/>
</dbReference>
<dbReference type="GO" id="GO:0007005">
    <property type="term" value="P:mitochondrion organization"/>
    <property type="evidence" value="ECO:0007669"/>
    <property type="project" value="InterPro"/>
</dbReference>
<dbReference type="GO" id="GO:1990456">
    <property type="term" value="P:mitochondrion-endoplasmic reticulum membrane tethering"/>
    <property type="evidence" value="ECO:0007669"/>
    <property type="project" value="TreeGrafter"/>
</dbReference>
<dbReference type="GO" id="GO:0015914">
    <property type="term" value="P:phospholipid transport"/>
    <property type="evidence" value="ECO:0007669"/>
    <property type="project" value="TreeGrafter"/>
</dbReference>
<dbReference type="InterPro" id="IPR027536">
    <property type="entry name" value="Mdm34"/>
</dbReference>
<dbReference type="InterPro" id="IPR031468">
    <property type="entry name" value="SMP_LBD"/>
</dbReference>
<dbReference type="PANTHER" id="PTHR28185">
    <property type="entry name" value="MITOCHONDRIAL DISTRIBUTION AND MORPHOLOGY PROTEIN 34"/>
    <property type="match status" value="1"/>
</dbReference>
<dbReference type="PANTHER" id="PTHR28185:SF1">
    <property type="entry name" value="MITOCHONDRIAL DISTRIBUTION AND MORPHOLOGY PROTEIN 34"/>
    <property type="match status" value="1"/>
</dbReference>
<dbReference type="PROSITE" id="PS51847">
    <property type="entry name" value="SMP"/>
    <property type="match status" value="1"/>
</dbReference>
<comment type="function">
    <text evidence="1">Component of the ERMES/MDM complex, which serves as a molecular tether to connect the endoplasmic reticulum (ER) and mitochondria. Components of this complex are involved in the control of mitochondrial shape and protein biogenesis, and function in nonvesicular lipid trafficking between the ER and mitochondria. MDM34 is required for the interaction of the ER-resident membrane protein MMM1 and the outer mitochondrial membrane-resident beta-barrel protein MDM10.</text>
</comment>
<comment type="subunit">
    <text evidence="1">Component of the ER-mitochondria encounter structure (ERMES) or MDM complex, composed of MMM1, MDM10, MDM12 and MDM34.</text>
</comment>
<comment type="subcellular location">
    <subcellularLocation>
        <location evidence="1">Mitochondrion outer membrane</location>
        <topology evidence="1">Multi-pass membrane protein</topology>
    </subcellularLocation>
    <text evidence="1">The ERMES/MDM complex localizes to a few discrete foci (around 10 per single cell), that represent mitochondria-endoplasmic reticulum junctions. These foci are often found next to mtDNA nucleoids.</text>
</comment>
<comment type="domain">
    <text evidence="1">Lacks alpha-helical transmembrane segments, suggesting that it resides in the membrane via beta-sheet conformations similar to those predicted for other outer membrane proteins and porin.</text>
</comment>
<comment type="domain">
    <text evidence="2">The SMP-LTD domain is a barrel-like domain that can bind various types of glycerophospholipids in its interior and mediate their transfer between two adjacent bilayers.</text>
</comment>
<comment type="similarity">
    <text evidence="4">Belongs to the MDM34 family.</text>
</comment>
<reference key="1">
    <citation type="journal article" date="2010" name="Proc. Natl. Acad. Sci. U.S.A.">
        <title>Insights into evolution of multicellular fungi from the assembled chromosomes of the mushroom Coprinopsis cinerea (Coprinus cinereus).</title>
        <authorList>
            <person name="Stajich J.E."/>
            <person name="Wilke S.K."/>
            <person name="Ahren D."/>
            <person name="Au C.H."/>
            <person name="Birren B.W."/>
            <person name="Borodovsky M."/>
            <person name="Burns C."/>
            <person name="Canbaeck B."/>
            <person name="Casselton L.A."/>
            <person name="Cheng C.K."/>
            <person name="Deng J."/>
            <person name="Dietrich F.S."/>
            <person name="Fargo D.C."/>
            <person name="Farman M.L."/>
            <person name="Gathman A.C."/>
            <person name="Goldberg J."/>
            <person name="Guigo R."/>
            <person name="Hoegger P.J."/>
            <person name="Hooker J.B."/>
            <person name="Huggins A."/>
            <person name="James T.Y."/>
            <person name="Kamada T."/>
            <person name="Kilaru S."/>
            <person name="Kodira C."/>
            <person name="Kuees U."/>
            <person name="Kupfer D."/>
            <person name="Kwan H.S."/>
            <person name="Lomsadze A."/>
            <person name="Li W."/>
            <person name="Lilly W.W."/>
            <person name="Ma L.-J."/>
            <person name="Mackey A.J."/>
            <person name="Manning G."/>
            <person name="Martin F."/>
            <person name="Muraguchi H."/>
            <person name="Natvig D.O."/>
            <person name="Palmerini H."/>
            <person name="Ramesh M.A."/>
            <person name="Rehmeyer C.J."/>
            <person name="Roe B.A."/>
            <person name="Shenoy N."/>
            <person name="Stanke M."/>
            <person name="Ter-Hovhannisyan V."/>
            <person name="Tunlid A."/>
            <person name="Velagapudi R."/>
            <person name="Vision T.J."/>
            <person name="Zeng Q."/>
            <person name="Zolan M.E."/>
            <person name="Pukkila P.J."/>
        </authorList>
    </citation>
    <scope>NUCLEOTIDE SEQUENCE [LARGE SCALE GENOMIC DNA]</scope>
    <source>
        <strain>Okayama-7 / 130 / ATCC MYA-4618 / FGSC 9003</strain>
    </source>
</reference>
<proteinExistence type="inferred from homology"/>
<feature type="chain" id="PRO_0000384339" description="Mitochondrial distribution and morphology protein 34">
    <location>
        <begin position="1"/>
        <end position="823"/>
    </location>
</feature>
<feature type="domain" description="SMP-LTD" evidence="2">
    <location>
        <begin position="1"/>
        <end position="88"/>
    </location>
</feature>
<feature type="region of interest" description="Disordered" evidence="3">
    <location>
        <begin position="97"/>
        <end position="127"/>
    </location>
</feature>
<feature type="region of interest" description="Disordered" evidence="3">
    <location>
        <begin position="157"/>
        <end position="221"/>
    </location>
</feature>
<feature type="region of interest" description="Disordered" evidence="3">
    <location>
        <begin position="263"/>
        <end position="289"/>
    </location>
</feature>
<feature type="region of interest" description="Disordered" evidence="3">
    <location>
        <begin position="357"/>
        <end position="377"/>
    </location>
</feature>
<feature type="region of interest" description="Disordered" evidence="3">
    <location>
        <begin position="473"/>
        <end position="588"/>
    </location>
</feature>
<feature type="region of interest" description="Disordered" evidence="3">
    <location>
        <begin position="627"/>
        <end position="663"/>
    </location>
</feature>
<feature type="region of interest" description="Disordered" evidence="3">
    <location>
        <begin position="718"/>
        <end position="823"/>
    </location>
</feature>
<feature type="compositionally biased region" description="Pro residues" evidence="3">
    <location>
        <begin position="110"/>
        <end position="121"/>
    </location>
</feature>
<feature type="compositionally biased region" description="Low complexity" evidence="3">
    <location>
        <begin position="161"/>
        <end position="175"/>
    </location>
</feature>
<feature type="compositionally biased region" description="Low complexity" evidence="3">
    <location>
        <begin position="197"/>
        <end position="217"/>
    </location>
</feature>
<feature type="compositionally biased region" description="Low complexity" evidence="3">
    <location>
        <begin position="359"/>
        <end position="371"/>
    </location>
</feature>
<feature type="compositionally biased region" description="Acidic residues" evidence="3">
    <location>
        <begin position="479"/>
        <end position="492"/>
    </location>
</feature>
<feature type="compositionally biased region" description="Basic residues" evidence="3">
    <location>
        <begin position="496"/>
        <end position="509"/>
    </location>
</feature>
<feature type="compositionally biased region" description="Low complexity" evidence="3">
    <location>
        <begin position="521"/>
        <end position="539"/>
    </location>
</feature>
<feature type="compositionally biased region" description="Polar residues" evidence="3">
    <location>
        <begin position="546"/>
        <end position="561"/>
    </location>
</feature>
<feature type="compositionally biased region" description="Low complexity" evidence="3">
    <location>
        <begin position="570"/>
        <end position="584"/>
    </location>
</feature>
<feature type="compositionally biased region" description="Low complexity" evidence="3">
    <location>
        <begin position="635"/>
        <end position="657"/>
    </location>
</feature>
<feature type="compositionally biased region" description="Basic and acidic residues" evidence="3">
    <location>
        <begin position="738"/>
        <end position="748"/>
    </location>
</feature>
<feature type="compositionally biased region" description="Basic residues" evidence="3">
    <location>
        <begin position="774"/>
        <end position="784"/>
    </location>
</feature>
<feature type="compositionally biased region" description="Basic and acidic residues" evidence="3">
    <location>
        <begin position="798"/>
        <end position="807"/>
    </location>
</feature>
<accession>A8NYS9</accession>
<keyword id="KW-0445">Lipid transport</keyword>
<keyword id="KW-0446">Lipid-binding</keyword>
<keyword id="KW-0472">Membrane</keyword>
<keyword id="KW-0496">Mitochondrion</keyword>
<keyword id="KW-1000">Mitochondrion outer membrane</keyword>
<keyword id="KW-1185">Reference proteome</keyword>
<keyword id="KW-0812">Transmembrane</keyword>
<keyword id="KW-1134">Transmembrane beta strand</keyword>
<keyword id="KW-0813">Transport</keyword>
<name>MDM34_COPC7</name>
<sequence length="823" mass="88429">MLAAKQPLVVPMHLRLSHFRLSSYVVLVVSKQKGITIVFKTDPLQNVDINSTFDSIAVIQSFIQREIEGQLRQMFREDLPSIIHRLSQQWVKAKVETPYKKQNQDSLQKAPPPTPTEPVPRPLGISRSRSAGHALETMSTPDLSAPQFDRRRTAASDIHGPAFLRPPLATAPRRPQSTTGISVAGRGSPLSAPPITHPTNSSTSTITSTSTAAEPSTFPDLEHFDPTYGLRPEGLPTKPVFKGFSKLFAPNKGLADLAEEISSQSSSVADGDSDYLSSGSATDEEEYERNSYDFVEWGSTTGPNTTPPEPVVEYETIPAIGGGTITRPRVVHAQSQIQLPPGVSPVASSPSRNVATVLSRTGSGSNGSRSGAVTPGILSRNPSNPYFADRLAALPHIYRPQNISSGPLSAPPIASSSRRPFSLAGGYDGHEDVKMKQRASYAYSVHEEAVYMQHTGGAVNRYPHPYDLERHRYQSESKYDDEDIEDYSDEEDNGRGPHHYHPRAHRTRHEAHDDYFTSRHPSASVPPSSPPRSSARPPSTIKRRLSVSSNTTNRTSFSASSAYKHHHPNHSSLSLDPSSSISNHPGNDKAKIVLRPSLLNNSIHHLSTLSHSNHTLSPYTRSFEHFAVRSGPPRGSGAASAVVKSGSGSGIPTPSTSGAGGGSGMAGGGIGLASGSGGGSLGRAKGLTTTAGIVGLGAATSRLGKTKADVVPKARRKRVFRIGGKKPEDNSNAAPGETDTRNVSREEYGADEIGEGYVEGLGHASGRAGSQMGKRPRPRHRKKPSYAASGTDFDEADMDRYFKSMHDAEEEATPVPRSKDRRP</sequence>
<organism>
    <name type="scientific">Coprinopsis cinerea (strain Okayama-7 / 130 / ATCC MYA-4618 / FGSC 9003)</name>
    <name type="common">Inky cap fungus</name>
    <name type="synonym">Hormographiella aspergillata</name>
    <dbReference type="NCBI Taxonomy" id="240176"/>
    <lineage>
        <taxon>Eukaryota</taxon>
        <taxon>Fungi</taxon>
        <taxon>Dikarya</taxon>
        <taxon>Basidiomycota</taxon>
        <taxon>Agaricomycotina</taxon>
        <taxon>Agaricomycetes</taxon>
        <taxon>Agaricomycetidae</taxon>
        <taxon>Agaricales</taxon>
        <taxon>Agaricineae</taxon>
        <taxon>Psathyrellaceae</taxon>
        <taxon>Coprinopsis</taxon>
    </lineage>
</organism>
<evidence type="ECO:0000250" key="1">
    <source>
        <dbReference type="UniProtKB" id="P53083"/>
    </source>
</evidence>
<evidence type="ECO:0000255" key="2">
    <source>
        <dbReference type="PROSITE-ProRule" id="PRU01194"/>
    </source>
</evidence>
<evidence type="ECO:0000256" key="3">
    <source>
        <dbReference type="SAM" id="MobiDB-lite"/>
    </source>
</evidence>
<evidence type="ECO:0000305" key="4"/>
<gene>
    <name type="primary">MDM34</name>
    <name type="ORF">CC1G_01424</name>
</gene>
<protein>
    <recommendedName>
        <fullName>Mitochondrial distribution and morphology protein 34</fullName>
    </recommendedName>
</protein>